<dbReference type="EC" id="4.2.1.20" evidence="1"/>
<dbReference type="EMBL" id="CP000468">
    <property type="protein sequence ID" value="ABJ00721.1"/>
    <property type="molecule type" value="Genomic_DNA"/>
</dbReference>
<dbReference type="RefSeq" id="WP_000209529.1">
    <property type="nucleotide sequence ID" value="NZ_CADILS010000001.1"/>
</dbReference>
<dbReference type="SMR" id="A1AAN1"/>
<dbReference type="KEGG" id="ecv:APECO1_422"/>
<dbReference type="HOGENOM" id="CLU_016734_3_1_6"/>
<dbReference type="UniPathway" id="UPA00035">
    <property type="reaction ID" value="UER00044"/>
</dbReference>
<dbReference type="Proteomes" id="UP000008216">
    <property type="component" value="Chromosome"/>
</dbReference>
<dbReference type="GO" id="GO:0005737">
    <property type="term" value="C:cytoplasm"/>
    <property type="evidence" value="ECO:0007669"/>
    <property type="project" value="TreeGrafter"/>
</dbReference>
<dbReference type="GO" id="GO:0004834">
    <property type="term" value="F:tryptophan synthase activity"/>
    <property type="evidence" value="ECO:0007669"/>
    <property type="project" value="UniProtKB-UniRule"/>
</dbReference>
<dbReference type="CDD" id="cd06446">
    <property type="entry name" value="Trp-synth_B"/>
    <property type="match status" value="1"/>
</dbReference>
<dbReference type="FunFam" id="3.40.50.1100:FF:000001">
    <property type="entry name" value="Tryptophan synthase beta chain"/>
    <property type="match status" value="1"/>
</dbReference>
<dbReference type="FunFam" id="3.40.50.1100:FF:000004">
    <property type="entry name" value="Tryptophan synthase beta chain"/>
    <property type="match status" value="1"/>
</dbReference>
<dbReference type="Gene3D" id="3.40.50.1100">
    <property type="match status" value="2"/>
</dbReference>
<dbReference type="HAMAP" id="MF_00133">
    <property type="entry name" value="Trp_synth_beta"/>
    <property type="match status" value="1"/>
</dbReference>
<dbReference type="InterPro" id="IPR006653">
    <property type="entry name" value="Trp_synth_b_CS"/>
</dbReference>
<dbReference type="InterPro" id="IPR006654">
    <property type="entry name" value="Trp_synth_beta"/>
</dbReference>
<dbReference type="InterPro" id="IPR023026">
    <property type="entry name" value="Trp_synth_beta/beta-like"/>
</dbReference>
<dbReference type="InterPro" id="IPR001926">
    <property type="entry name" value="TrpB-like_PALP"/>
</dbReference>
<dbReference type="InterPro" id="IPR036052">
    <property type="entry name" value="TrpB-like_PALP_sf"/>
</dbReference>
<dbReference type="NCBIfam" id="TIGR00263">
    <property type="entry name" value="trpB"/>
    <property type="match status" value="1"/>
</dbReference>
<dbReference type="PANTHER" id="PTHR48077:SF3">
    <property type="entry name" value="TRYPTOPHAN SYNTHASE"/>
    <property type="match status" value="1"/>
</dbReference>
<dbReference type="PANTHER" id="PTHR48077">
    <property type="entry name" value="TRYPTOPHAN SYNTHASE-RELATED"/>
    <property type="match status" value="1"/>
</dbReference>
<dbReference type="Pfam" id="PF00291">
    <property type="entry name" value="PALP"/>
    <property type="match status" value="1"/>
</dbReference>
<dbReference type="PIRSF" id="PIRSF001413">
    <property type="entry name" value="Trp_syn_beta"/>
    <property type="match status" value="1"/>
</dbReference>
<dbReference type="SUPFAM" id="SSF53686">
    <property type="entry name" value="Tryptophan synthase beta subunit-like PLP-dependent enzymes"/>
    <property type="match status" value="1"/>
</dbReference>
<dbReference type="PROSITE" id="PS00168">
    <property type="entry name" value="TRP_SYNTHASE_BETA"/>
    <property type="match status" value="1"/>
</dbReference>
<organism>
    <name type="scientific">Escherichia coli O1:K1 / APEC</name>
    <dbReference type="NCBI Taxonomy" id="405955"/>
    <lineage>
        <taxon>Bacteria</taxon>
        <taxon>Pseudomonadati</taxon>
        <taxon>Pseudomonadota</taxon>
        <taxon>Gammaproteobacteria</taxon>
        <taxon>Enterobacterales</taxon>
        <taxon>Enterobacteriaceae</taxon>
        <taxon>Escherichia</taxon>
    </lineage>
</organism>
<protein>
    <recommendedName>
        <fullName evidence="1">Tryptophan synthase beta chain</fullName>
        <ecNumber evidence="1">4.2.1.20</ecNumber>
    </recommendedName>
</protein>
<reference key="1">
    <citation type="journal article" date="2007" name="J. Bacteriol.">
        <title>The genome sequence of avian pathogenic Escherichia coli strain O1:K1:H7 shares strong similarities with human extraintestinal pathogenic E. coli genomes.</title>
        <authorList>
            <person name="Johnson T.J."/>
            <person name="Kariyawasam S."/>
            <person name="Wannemuehler Y."/>
            <person name="Mangiamele P."/>
            <person name="Johnson S.J."/>
            <person name="Doetkott C."/>
            <person name="Skyberg J.A."/>
            <person name="Lynne A.M."/>
            <person name="Johnson J.R."/>
            <person name="Nolan L.K."/>
        </authorList>
    </citation>
    <scope>NUCLEOTIDE SEQUENCE [LARGE SCALE GENOMIC DNA]</scope>
</reference>
<keyword id="KW-0028">Amino-acid biosynthesis</keyword>
<keyword id="KW-0057">Aromatic amino acid biosynthesis</keyword>
<keyword id="KW-0456">Lyase</keyword>
<keyword id="KW-0663">Pyridoxal phosphate</keyword>
<keyword id="KW-1185">Reference proteome</keyword>
<keyword id="KW-0822">Tryptophan biosynthesis</keyword>
<proteinExistence type="inferred from homology"/>
<feature type="chain" id="PRO_1000018335" description="Tryptophan synthase beta chain">
    <location>
        <begin position="1"/>
        <end position="397"/>
    </location>
</feature>
<feature type="modified residue" description="N6-(pyridoxal phosphate)lysine" evidence="1">
    <location>
        <position position="87"/>
    </location>
</feature>
<evidence type="ECO:0000255" key="1">
    <source>
        <dbReference type="HAMAP-Rule" id="MF_00133"/>
    </source>
</evidence>
<gene>
    <name evidence="1" type="primary">trpB</name>
    <name type="ordered locus">Ecok1_12270</name>
    <name type="ORF">APECO1_422</name>
</gene>
<accession>A1AAN1</accession>
<sequence length="397" mass="42997">MTTLLNPYFGEFGGMYVPQILMPALRQLEEAFVSAQKDPEFQAQFNDLLKNYAGRPTALTKCQNITAGTNTTLYLKREDLLHGGAHKTNQVLGQALLAKRMGKTKIIAETGAGQHGVASALASALLGLKCRIYMGAKDVERQSPNVFRMRLMGAEVIPVHSGSATLKDACNEALRDWSGSYETAHYMLGTAAGPHPYPTIVREFQRMIGEETKAQILEREGRLPDAVIACVGGGSNAIGMFADFINETDVGLIGVEPGGHGIETGEHGAPLKHGRVGIYFGMKAPMMQTEDGQIEESYSISAGLDFPSVGPQHAYLNSTGRADYVSITDDEALEAFKTLCLHEGIIPALESSHALAHALKMMRENPEKEQLLVVNLSGRGDKDIFTVHDILKARGEI</sequence>
<comment type="function">
    <text evidence="1">The beta subunit is responsible for the synthesis of L-tryptophan from indole and L-serine.</text>
</comment>
<comment type="catalytic activity">
    <reaction evidence="1">
        <text>(1S,2R)-1-C-(indol-3-yl)glycerol 3-phosphate + L-serine = D-glyceraldehyde 3-phosphate + L-tryptophan + H2O</text>
        <dbReference type="Rhea" id="RHEA:10532"/>
        <dbReference type="ChEBI" id="CHEBI:15377"/>
        <dbReference type="ChEBI" id="CHEBI:33384"/>
        <dbReference type="ChEBI" id="CHEBI:57912"/>
        <dbReference type="ChEBI" id="CHEBI:58866"/>
        <dbReference type="ChEBI" id="CHEBI:59776"/>
        <dbReference type="EC" id="4.2.1.20"/>
    </reaction>
</comment>
<comment type="cofactor">
    <cofactor evidence="1">
        <name>pyridoxal 5'-phosphate</name>
        <dbReference type="ChEBI" id="CHEBI:597326"/>
    </cofactor>
</comment>
<comment type="pathway">
    <text evidence="1">Amino-acid biosynthesis; L-tryptophan biosynthesis; L-tryptophan from chorismate: step 5/5.</text>
</comment>
<comment type="subunit">
    <text evidence="1">Tetramer of two alpha and two beta chains.</text>
</comment>
<comment type="similarity">
    <text evidence="1">Belongs to the TrpB family.</text>
</comment>
<name>TRPB_ECOK1</name>